<gene>
    <name evidence="1" type="primary">lepA</name>
    <name type="ordered locus">ROP_09980</name>
</gene>
<feature type="chain" id="PRO_1000190825" description="Elongation factor 4">
    <location>
        <begin position="1"/>
        <end position="630"/>
    </location>
</feature>
<feature type="domain" description="tr-type G">
    <location>
        <begin position="30"/>
        <end position="211"/>
    </location>
</feature>
<feature type="region of interest" description="Disordered" evidence="2">
    <location>
        <begin position="1"/>
        <end position="22"/>
    </location>
</feature>
<feature type="binding site" evidence="1">
    <location>
        <begin position="42"/>
        <end position="47"/>
    </location>
    <ligand>
        <name>GTP</name>
        <dbReference type="ChEBI" id="CHEBI:37565"/>
    </ligand>
</feature>
<feature type="binding site" evidence="1">
    <location>
        <begin position="158"/>
        <end position="161"/>
    </location>
    <ligand>
        <name>GTP</name>
        <dbReference type="ChEBI" id="CHEBI:37565"/>
    </ligand>
</feature>
<comment type="function">
    <text evidence="1">Required for accurate and efficient protein synthesis under certain stress conditions. May act as a fidelity factor of the translation reaction, by catalyzing a one-codon backward translocation of tRNAs on improperly translocated ribosomes. Back-translocation proceeds from a post-translocation (POST) complex to a pre-translocation (PRE) complex, thus giving elongation factor G a second chance to translocate the tRNAs correctly. Binds to ribosomes in a GTP-dependent manner.</text>
</comment>
<comment type="catalytic activity">
    <reaction evidence="1">
        <text>GTP + H2O = GDP + phosphate + H(+)</text>
        <dbReference type="Rhea" id="RHEA:19669"/>
        <dbReference type="ChEBI" id="CHEBI:15377"/>
        <dbReference type="ChEBI" id="CHEBI:15378"/>
        <dbReference type="ChEBI" id="CHEBI:37565"/>
        <dbReference type="ChEBI" id="CHEBI:43474"/>
        <dbReference type="ChEBI" id="CHEBI:58189"/>
        <dbReference type="EC" id="3.6.5.n1"/>
    </reaction>
</comment>
<comment type="subcellular location">
    <subcellularLocation>
        <location evidence="1">Cell membrane</location>
        <topology evidence="1">Peripheral membrane protein</topology>
        <orientation evidence="1">Cytoplasmic side</orientation>
    </subcellularLocation>
</comment>
<comment type="similarity">
    <text evidence="1">Belongs to the TRAFAC class translation factor GTPase superfamily. Classic translation factor GTPase family. LepA subfamily.</text>
</comment>
<evidence type="ECO:0000255" key="1">
    <source>
        <dbReference type="HAMAP-Rule" id="MF_00071"/>
    </source>
</evidence>
<evidence type="ECO:0000256" key="2">
    <source>
        <dbReference type="SAM" id="MobiDB-lite"/>
    </source>
</evidence>
<reference key="1">
    <citation type="submission" date="2009-03" db="EMBL/GenBank/DDBJ databases">
        <title>Comparison of the complete genome sequences of Rhodococcus erythropolis PR4 and Rhodococcus opacus B4.</title>
        <authorList>
            <person name="Takarada H."/>
            <person name="Sekine M."/>
            <person name="Hosoyama A."/>
            <person name="Yamada R."/>
            <person name="Fujisawa T."/>
            <person name="Omata S."/>
            <person name="Shimizu A."/>
            <person name="Tsukatani N."/>
            <person name="Tanikawa S."/>
            <person name="Fujita N."/>
            <person name="Harayama S."/>
        </authorList>
    </citation>
    <scope>NUCLEOTIDE SEQUENCE [LARGE SCALE GENOMIC DNA]</scope>
    <source>
        <strain>B4</strain>
    </source>
</reference>
<organism>
    <name type="scientific">Rhodococcus opacus (strain B4)</name>
    <dbReference type="NCBI Taxonomy" id="632772"/>
    <lineage>
        <taxon>Bacteria</taxon>
        <taxon>Bacillati</taxon>
        <taxon>Actinomycetota</taxon>
        <taxon>Actinomycetes</taxon>
        <taxon>Mycobacteriales</taxon>
        <taxon>Nocardiaceae</taxon>
        <taxon>Rhodococcus</taxon>
    </lineage>
</organism>
<keyword id="KW-1003">Cell membrane</keyword>
<keyword id="KW-0342">GTP-binding</keyword>
<keyword id="KW-0378">Hydrolase</keyword>
<keyword id="KW-0472">Membrane</keyword>
<keyword id="KW-0547">Nucleotide-binding</keyword>
<keyword id="KW-0648">Protein biosynthesis</keyword>
<protein>
    <recommendedName>
        <fullName evidence="1">Elongation factor 4</fullName>
        <shortName evidence="1">EF-4</shortName>
        <ecNumber evidence="1">3.6.5.n1</ecNumber>
    </recommendedName>
    <alternativeName>
        <fullName evidence="1">Ribosomal back-translocase LepA</fullName>
    </alternativeName>
</protein>
<accession>C1AUN7</accession>
<dbReference type="EC" id="3.6.5.n1" evidence="1"/>
<dbReference type="EMBL" id="AP011115">
    <property type="protein sequence ID" value="BAH49245.1"/>
    <property type="molecule type" value="Genomic_DNA"/>
</dbReference>
<dbReference type="RefSeq" id="WP_012688231.1">
    <property type="nucleotide sequence ID" value="NC_012522.1"/>
</dbReference>
<dbReference type="SMR" id="C1AUN7"/>
<dbReference type="STRING" id="632772.ROP_09980"/>
<dbReference type="KEGG" id="rop:ROP_09980"/>
<dbReference type="PATRIC" id="fig|632772.20.peg.1063"/>
<dbReference type="HOGENOM" id="CLU_009995_3_3_11"/>
<dbReference type="OrthoDB" id="9801472at2"/>
<dbReference type="Proteomes" id="UP000002212">
    <property type="component" value="Chromosome"/>
</dbReference>
<dbReference type="GO" id="GO:0005886">
    <property type="term" value="C:plasma membrane"/>
    <property type="evidence" value="ECO:0007669"/>
    <property type="project" value="UniProtKB-SubCell"/>
</dbReference>
<dbReference type="GO" id="GO:0005525">
    <property type="term" value="F:GTP binding"/>
    <property type="evidence" value="ECO:0007669"/>
    <property type="project" value="UniProtKB-UniRule"/>
</dbReference>
<dbReference type="GO" id="GO:0003924">
    <property type="term" value="F:GTPase activity"/>
    <property type="evidence" value="ECO:0007669"/>
    <property type="project" value="UniProtKB-UniRule"/>
</dbReference>
<dbReference type="GO" id="GO:0043022">
    <property type="term" value="F:ribosome binding"/>
    <property type="evidence" value="ECO:0007669"/>
    <property type="project" value="UniProtKB-UniRule"/>
</dbReference>
<dbReference type="GO" id="GO:0003746">
    <property type="term" value="F:translation elongation factor activity"/>
    <property type="evidence" value="ECO:0007669"/>
    <property type="project" value="UniProtKB-UniRule"/>
</dbReference>
<dbReference type="GO" id="GO:0045727">
    <property type="term" value="P:positive regulation of translation"/>
    <property type="evidence" value="ECO:0007669"/>
    <property type="project" value="UniProtKB-UniRule"/>
</dbReference>
<dbReference type="CDD" id="cd03699">
    <property type="entry name" value="EF4_II"/>
    <property type="match status" value="1"/>
</dbReference>
<dbReference type="CDD" id="cd16260">
    <property type="entry name" value="EF4_III"/>
    <property type="match status" value="1"/>
</dbReference>
<dbReference type="CDD" id="cd01890">
    <property type="entry name" value="LepA"/>
    <property type="match status" value="1"/>
</dbReference>
<dbReference type="CDD" id="cd03709">
    <property type="entry name" value="lepA_C"/>
    <property type="match status" value="1"/>
</dbReference>
<dbReference type="FunFam" id="3.30.70.240:FF:000011">
    <property type="entry name" value="Elongation factor 4"/>
    <property type="match status" value="1"/>
</dbReference>
<dbReference type="FunFam" id="3.40.50.300:FF:000078">
    <property type="entry name" value="Elongation factor 4"/>
    <property type="match status" value="1"/>
</dbReference>
<dbReference type="FunFam" id="2.40.30.10:FF:000015">
    <property type="entry name" value="Translation factor GUF1, mitochondrial"/>
    <property type="match status" value="1"/>
</dbReference>
<dbReference type="FunFam" id="3.30.70.2570:FF:000001">
    <property type="entry name" value="Translation factor GUF1, mitochondrial"/>
    <property type="match status" value="1"/>
</dbReference>
<dbReference type="FunFam" id="3.30.70.870:FF:000004">
    <property type="entry name" value="Translation factor GUF1, mitochondrial"/>
    <property type="match status" value="1"/>
</dbReference>
<dbReference type="Gene3D" id="3.30.70.240">
    <property type="match status" value="1"/>
</dbReference>
<dbReference type="Gene3D" id="3.30.70.2570">
    <property type="entry name" value="Elongation factor 4, C-terminal domain"/>
    <property type="match status" value="1"/>
</dbReference>
<dbReference type="Gene3D" id="3.30.70.870">
    <property type="entry name" value="Elongation Factor G (Translational Gtpase), domain 3"/>
    <property type="match status" value="1"/>
</dbReference>
<dbReference type="Gene3D" id="3.40.50.300">
    <property type="entry name" value="P-loop containing nucleotide triphosphate hydrolases"/>
    <property type="match status" value="1"/>
</dbReference>
<dbReference type="Gene3D" id="2.40.30.10">
    <property type="entry name" value="Translation factors"/>
    <property type="match status" value="1"/>
</dbReference>
<dbReference type="HAMAP" id="MF_00071">
    <property type="entry name" value="LepA"/>
    <property type="match status" value="1"/>
</dbReference>
<dbReference type="InterPro" id="IPR006297">
    <property type="entry name" value="EF-4"/>
</dbReference>
<dbReference type="InterPro" id="IPR035647">
    <property type="entry name" value="EFG_III/V"/>
</dbReference>
<dbReference type="InterPro" id="IPR000640">
    <property type="entry name" value="EFG_V-like"/>
</dbReference>
<dbReference type="InterPro" id="IPR004161">
    <property type="entry name" value="EFTu-like_2"/>
</dbReference>
<dbReference type="InterPro" id="IPR031157">
    <property type="entry name" value="G_TR_CS"/>
</dbReference>
<dbReference type="InterPro" id="IPR038363">
    <property type="entry name" value="LepA_C_sf"/>
</dbReference>
<dbReference type="InterPro" id="IPR013842">
    <property type="entry name" value="LepA_CTD"/>
</dbReference>
<dbReference type="InterPro" id="IPR035654">
    <property type="entry name" value="LepA_IV"/>
</dbReference>
<dbReference type="InterPro" id="IPR027417">
    <property type="entry name" value="P-loop_NTPase"/>
</dbReference>
<dbReference type="InterPro" id="IPR005225">
    <property type="entry name" value="Small_GTP-bd"/>
</dbReference>
<dbReference type="InterPro" id="IPR000795">
    <property type="entry name" value="T_Tr_GTP-bd_dom"/>
</dbReference>
<dbReference type="InterPro" id="IPR009000">
    <property type="entry name" value="Transl_B-barrel_sf"/>
</dbReference>
<dbReference type="NCBIfam" id="TIGR01393">
    <property type="entry name" value="lepA"/>
    <property type="match status" value="1"/>
</dbReference>
<dbReference type="NCBIfam" id="TIGR00231">
    <property type="entry name" value="small_GTP"/>
    <property type="match status" value="1"/>
</dbReference>
<dbReference type="PANTHER" id="PTHR43512:SF4">
    <property type="entry name" value="TRANSLATION FACTOR GUF1 HOMOLOG, CHLOROPLASTIC"/>
    <property type="match status" value="1"/>
</dbReference>
<dbReference type="PANTHER" id="PTHR43512">
    <property type="entry name" value="TRANSLATION FACTOR GUF1-RELATED"/>
    <property type="match status" value="1"/>
</dbReference>
<dbReference type="Pfam" id="PF00679">
    <property type="entry name" value="EFG_C"/>
    <property type="match status" value="1"/>
</dbReference>
<dbReference type="Pfam" id="PF00009">
    <property type="entry name" value="GTP_EFTU"/>
    <property type="match status" value="1"/>
</dbReference>
<dbReference type="Pfam" id="PF03144">
    <property type="entry name" value="GTP_EFTU_D2"/>
    <property type="match status" value="1"/>
</dbReference>
<dbReference type="Pfam" id="PF06421">
    <property type="entry name" value="LepA_C"/>
    <property type="match status" value="1"/>
</dbReference>
<dbReference type="PRINTS" id="PR00315">
    <property type="entry name" value="ELONGATNFCT"/>
</dbReference>
<dbReference type="SMART" id="SM00838">
    <property type="entry name" value="EFG_C"/>
    <property type="match status" value="1"/>
</dbReference>
<dbReference type="SUPFAM" id="SSF54980">
    <property type="entry name" value="EF-G C-terminal domain-like"/>
    <property type="match status" value="2"/>
</dbReference>
<dbReference type="SUPFAM" id="SSF52540">
    <property type="entry name" value="P-loop containing nucleoside triphosphate hydrolases"/>
    <property type="match status" value="1"/>
</dbReference>
<dbReference type="SUPFAM" id="SSF50447">
    <property type="entry name" value="Translation proteins"/>
    <property type="match status" value="1"/>
</dbReference>
<dbReference type="PROSITE" id="PS00301">
    <property type="entry name" value="G_TR_1"/>
    <property type="match status" value="1"/>
</dbReference>
<dbReference type="PROSITE" id="PS51722">
    <property type="entry name" value="G_TR_2"/>
    <property type="match status" value="1"/>
</dbReference>
<sequence length="630" mass="69406">MTVARNRAGAGPGKGSPISSFADKTFTDPARIRNFCIIAHIDHGKSTLADRMLQLTGVVEERQMRAQYLDRMDIERERGITIKAQNVRLPWKVGDDEFVIHLIDTPGHVDFTYEVSRALEACEGAVLLVDAAQGIEAQTLANLYLAMEKDLTIIPVLNKIDLPAADPDRYAEEIAHITGCEPGDVLRVSGKTGMGVKELLDEVVRQVPAPVGDPDGPARAMIFDSVYDAYRGVVTYVRVVDGRISPREKITMMSTGATHDLIEVGIISPEPKASIGLGVGEVGYLITGVKDVRQSRVGDTVTAARGGATEPLVGYRDPKPMVYSGLYPLDGSDYPVLRDALDKLRLNDAALAYEPETSVALGFGFRCGFLGLLHMEITRDRLEREFGLELISTSPNVVYRVVMEDGAEHVVTNPSYWPEGKIREVYEPMVKCTVIAPSEFIGAIMELCQNRRGELGGMDYLSETRVELRYEMPMGEIMFDFFDALKSRTKGYASLDYEEAGEQQADLVKVDILLQGEAVDAFSSIVHRSAAGAYGGRMTSKLRELIPRQQFEVPIQAAIGSKIISRENIRAIRKDVLAKCYGGDISRKRKLLEKQKEGKKRMKTIGRVEVPQEAFVAALSSESVGDKPKK</sequence>
<proteinExistence type="inferred from homology"/>
<name>LEPA_RHOOB</name>